<reference key="1">
    <citation type="submission" date="1998-01" db="EMBL/GenBank/DDBJ databases">
        <title>Genomic characterization of the human and mouse HOX11L2 genes.</title>
        <authorList>
            <person name="Delgado P."/>
            <person name="Rodriguez R."/>
            <person name="Gonzalez-Sarmiento R."/>
        </authorList>
    </citation>
    <scope>NUCLEOTIDE SEQUENCE [GENOMIC DNA]</scope>
</reference>
<reference key="2">
    <citation type="journal article" date="2004" name="Genome Res.">
        <title>The status, quality, and expansion of the NIH full-length cDNA project: the Mammalian Gene Collection (MGC).</title>
        <authorList>
            <consortium name="The MGC Project Team"/>
        </authorList>
    </citation>
    <scope>NUCLEOTIDE SEQUENCE [LARGE SCALE MRNA]</scope>
    <source>
        <tissue>Muscle</tissue>
    </source>
</reference>
<protein>
    <recommendedName>
        <fullName>T-cell leukemia homeobox protein 3</fullName>
    </recommendedName>
    <alternativeName>
        <fullName>Homeobox protein Hox-11L2</fullName>
    </alternativeName>
</protein>
<proteinExistence type="evidence at protein level"/>
<name>TLX3_HUMAN</name>
<accession>O43711</accession>
<accession>Q96AD3</accession>
<gene>
    <name type="primary">TLX3</name>
    <name type="synonym">HOX11L2</name>
</gene>
<evidence type="ECO:0000255" key="1">
    <source>
        <dbReference type="PROSITE-ProRule" id="PRU00108"/>
    </source>
</evidence>
<evidence type="ECO:0000256" key="2">
    <source>
        <dbReference type="SAM" id="MobiDB-lite"/>
    </source>
</evidence>
<evidence type="ECO:0000305" key="3"/>
<comment type="interaction">
    <interactant intactId="EBI-3939165">
        <id>O43711</id>
    </interactant>
    <interactant intactId="EBI-11976299">
        <id>Q5BKX5-3</id>
        <label>ACTMAP</label>
    </interactant>
    <organismsDiffer>false</organismsDiffer>
    <experiments>3</experiments>
</comment>
<comment type="interaction">
    <interactant intactId="EBI-3939165">
        <id>O43711</id>
    </interactant>
    <interactant intactId="EBI-742064">
        <id>Q03154</id>
        <label>ACY1</label>
    </interactant>
    <organismsDiffer>false</organismsDiffer>
    <experiments>3</experiments>
</comment>
<comment type="interaction">
    <interactant intactId="EBI-3939165">
        <id>O43711</id>
    </interactant>
    <interactant intactId="EBI-11745576">
        <id>Q6PJH3</id>
        <label>AKAP9</label>
    </interactant>
    <organismsDiffer>false</organismsDiffer>
    <experiments>3</experiments>
</comment>
<comment type="interaction">
    <interactant intactId="EBI-3939165">
        <id>O43711</id>
    </interactant>
    <interactant intactId="EBI-12102070">
        <id>Q9NXR5-2</id>
        <label>ANKRD10</label>
    </interactant>
    <organismsDiffer>false</organismsDiffer>
    <experiments>5</experiments>
</comment>
<comment type="interaction">
    <interactant intactId="EBI-3939165">
        <id>O43711</id>
    </interactant>
    <interactant intactId="EBI-16746154">
        <id>Q7Z3H0-1</id>
        <label>ANKRD33</label>
    </interactant>
    <organismsDiffer>false</organismsDiffer>
    <experiments>3</experiments>
</comment>
<comment type="interaction">
    <interactant intactId="EBI-3939165">
        <id>O43711</id>
    </interactant>
    <interactant intactId="EBI-12826295">
        <id>P19801</id>
        <label>AOC1</label>
    </interactant>
    <organismsDiffer>false</organismsDiffer>
    <experiments>3</experiments>
</comment>
<comment type="interaction">
    <interactant intactId="EBI-3939165">
        <id>O43711</id>
    </interactant>
    <interactant intactId="EBI-12059807">
        <id>Q7Z5R6-2</id>
        <label>APBB1IP</label>
    </interactant>
    <organismsDiffer>false</organismsDiffer>
    <experiments>3</experiments>
</comment>
<comment type="interaction">
    <interactant intactId="EBI-3939165">
        <id>O43711</id>
    </interactant>
    <interactant intactId="EBI-6425121">
        <id>Q96C12</id>
        <label>ARMC5</label>
    </interactant>
    <organismsDiffer>false</organismsDiffer>
    <experiments>3</experiments>
</comment>
<comment type="interaction">
    <interactant intactId="EBI-3939165">
        <id>O43711</id>
    </interactant>
    <interactant intactId="EBI-18394052">
        <id>Q8WXK4-2</id>
        <label>ASB12</label>
    </interactant>
    <organismsDiffer>false</organismsDiffer>
    <experiments>3</experiments>
</comment>
<comment type="interaction">
    <interactant intactId="EBI-3939165">
        <id>O43711</id>
    </interactant>
    <interactant intactId="EBI-954063">
        <id>P61421</id>
        <label>ATP6V0D1</label>
    </interactant>
    <organismsDiffer>false</organismsDiffer>
    <experiments>3</experiments>
</comment>
<comment type="interaction">
    <interactant intactId="EBI-3939165">
        <id>O43711</id>
    </interactant>
    <interactant intactId="EBI-6958971">
        <id>Q9BPU9</id>
        <label>B9D2</label>
    </interactant>
    <organismsDiffer>false</organismsDiffer>
    <experiments>3</experiments>
</comment>
<comment type="interaction">
    <interactant intactId="EBI-3939165">
        <id>O43711</id>
    </interactant>
    <interactant intactId="EBI-953896">
        <id>Q9NP55</id>
        <label>BPIFA1</label>
    </interactant>
    <organismsDiffer>false</organismsDiffer>
    <experiments>3</experiments>
</comment>
<comment type="interaction">
    <interactant intactId="EBI-3939165">
        <id>O43711</id>
    </interactant>
    <interactant intactId="EBI-2812028">
        <id>Q9NWW7</id>
        <label>C2orf42</label>
    </interactant>
    <organismsDiffer>false</organismsDiffer>
    <experiments>3</experiments>
</comment>
<comment type="interaction">
    <interactant intactId="EBI-3939165">
        <id>O43711</id>
    </interactant>
    <interactant intactId="EBI-4314501">
        <id>P40199</id>
        <label>CEACAM6</label>
    </interactant>
    <organismsDiffer>false</organismsDiffer>
    <experiments>3</experiments>
</comment>
<comment type="interaction">
    <interactant intactId="EBI-3939165">
        <id>O43711</id>
    </interactant>
    <interactant intactId="EBI-718615">
        <id>Q9H5F2</id>
        <label>CFAP68</label>
    </interactant>
    <organismsDiffer>false</organismsDiffer>
    <experiments>3</experiments>
</comment>
<comment type="interaction">
    <interactant intactId="EBI-3939165">
        <id>O43711</id>
    </interactant>
    <interactant intactId="EBI-12160437">
        <id>A8MTA8-2</id>
        <label>CIMIP2B</label>
    </interactant>
    <organismsDiffer>false</organismsDiffer>
    <experiments>3</experiments>
</comment>
<comment type="interaction">
    <interactant intactId="EBI-3939165">
        <id>O43711</id>
    </interactant>
    <interactant intactId="EBI-748171">
        <id>O43186</id>
        <label>CRX</label>
    </interactant>
    <organismsDiffer>false</organismsDiffer>
    <experiments>3</experiments>
</comment>
<comment type="interaction">
    <interactant intactId="EBI-3939165">
        <id>O43711</id>
    </interactant>
    <interactant intactId="EBI-348169">
        <id>P67870</id>
        <label>CSNK2B</label>
    </interactant>
    <organismsDiffer>false</organismsDiffer>
    <experiments>3</experiments>
</comment>
<comment type="interaction">
    <interactant intactId="EBI-3939165">
        <id>O43711</id>
    </interactant>
    <interactant intactId="EBI-11962928">
        <id>Q9UI47-2</id>
        <label>CTNNA3</label>
    </interactant>
    <organismsDiffer>false</organismsDiffer>
    <experiments>3</experiments>
</comment>
<comment type="interaction">
    <interactant intactId="EBI-3939165">
        <id>O43711</id>
    </interactant>
    <interactant intactId="EBI-743414">
        <id>O95967</id>
        <label>EFEMP2</label>
    </interactant>
    <organismsDiffer>false</organismsDiffer>
    <experiments>3</experiments>
</comment>
<comment type="interaction">
    <interactant intactId="EBI-3939165">
        <id>O43711</id>
    </interactant>
    <interactant intactId="EBI-13351543">
        <id>Q7Z444</id>
        <label>ERAS</label>
    </interactant>
    <organismsDiffer>false</organismsDiffer>
    <experiments>3</experiments>
</comment>
<comment type="interaction">
    <interactant intactId="EBI-3939165">
        <id>O43711</id>
    </interactant>
    <interactant intactId="EBI-12193763">
        <id>A1KXE4-2</id>
        <label>FAM168B</label>
    </interactant>
    <organismsDiffer>false</organismsDiffer>
    <experiments>3</experiments>
</comment>
<comment type="interaction">
    <interactant intactId="EBI-3939165">
        <id>O43711</id>
    </interactant>
    <interactant intactId="EBI-4291312">
        <id>Q8N0W3</id>
        <label>FCSK</label>
    </interactant>
    <organismsDiffer>false</organismsDiffer>
    <experiments>3</experiments>
</comment>
<comment type="interaction">
    <interactant intactId="EBI-3939165">
        <id>O43711</id>
    </interactant>
    <interactant intactId="EBI-602349">
        <id>P49356</id>
        <label>FNTB</label>
    </interactant>
    <organismsDiffer>false</organismsDiffer>
    <experiments>3</experiments>
</comment>
<comment type="interaction">
    <interactant intactId="EBI-3939165">
        <id>O43711</id>
    </interactant>
    <interactant intactId="EBI-2806743">
        <id>P53539</id>
        <label>FOSB</label>
    </interactant>
    <organismsDiffer>false</organismsDiffer>
    <experiments>3</experiments>
</comment>
<comment type="interaction">
    <interactant intactId="EBI-3939165">
        <id>O43711</id>
    </interactant>
    <interactant intactId="EBI-1759806">
        <id>O75593</id>
        <label>FOXH1</label>
    </interactant>
    <organismsDiffer>false</organismsDiffer>
    <experiments>3</experiments>
</comment>
<comment type="interaction">
    <interactant intactId="EBI-3939165">
        <id>O43711</id>
    </interactant>
    <interactant intactId="EBI-12903880">
        <id>Q14390</id>
        <label>GGTLC2</label>
    </interactant>
    <organismsDiffer>false</organismsDiffer>
    <experiments>3</experiments>
</comment>
<comment type="interaction">
    <interactant intactId="EBI-3939165">
        <id>O43711</id>
    </interactant>
    <interactant intactId="EBI-5916454">
        <id>A6NEM1</id>
        <label>GOLGA6L9</label>
    </interactant>
    <organismsDiffer>false</organismsDiffer>
    <experiments>3</experiments>
</comment>
<comment type="interaction">
    <interactant intactId="EBI-3939165">
        <id>O43711</id>
    </interactant>
    <interactant intactId="EBI-739395">
        <id>Q16082</id>
        <label>HSPB2</label>
    </interactant>
    <organismsDiffer>false</organismsDiffer>
    <experiments>3</experiments>
</comment>
<comment type="interaction">
    <interactant intactId="EBI-3939165">
        <id>O43711</id>
    </interactant>
    <interactant intactId="EBI-18115692">
        <id>Q6UWQ7-2</id>
        <label>IGFL2</label>
    </interactant>
    <organismsDiffer>false</organismsDiffer>
    <experiments>3</experiments>
</comment>
<comment type="interaction">
    <interactant intactId="EBI-3939165">
        <id>O43711</id>
    </interactant>
    <interactant intactId="EBI-748258">
        <id>Q5TA45</id>
        <label>INTS11</label>
    </interactant>
    <organismsDiffer>false</organismsDiffer>
    <experiments>3</experiments>
</comment>
<comment type="interaction">
    <interactant intactId="EBI-3939165">
        <id>O43711</id>
    </interactant>
    <interactant intactId="EBI-11028396">
        <id>Q6UXX5</id>
        <label>ITIH6</label>
    </interactant>
    <organismsDiffer>false</organismsDiffer>
    <experiments>3</experiments>
</comment>
<comment type="interaction">
    <interactant intactId="EBI-3939165">
        <id>O43711</id>
    </interactant>
    <interactant intactId="EBI-12810853">
        <id>Q8TAV5</id>
        <label>KCNJ5-AS1</label>
    </interactant>
    <organismsDiffer>false</organismsDiffer>
    <experiments>3</experiments>
</comment>
<comment type="interaction">
    <interactant intactId="EBI-3939165">
        <id>O43711</id>
    </interactant>
    <interactant intactId="EBI-1047093">
        <id>O76011</id>
        <label>KRT34</label>
    </interactant>
    <organismsDiffer>false</organismsDiffer>
    <experiments>3</experiments>
</comment>
<comment type="interaction">
    <interactant intactId="EBI-3939165">
        <id>O43711</id>
    </interactant>
    <interactant intactId="EBI-1052037">
        <id>Q8IUC1</id>
        <label>KRTAP11-1</label>
    </interactant>
    <organismsDiffer>false</organismsDiffer>
    <experiments>3</experiments>
</comment>
<comment type="interaction">
    <interactant intactId="EBI-3939165">
        <id>O43711</id>
    </interactant>
    <interactant intactId="EBI-10241252">
        <id>Q3SY46</id>
        <label>KRTAP13-3</label>
    </interactant>
    <organismsDiffer>false</organismsDiffer>
    <experiments>3</experiments>
</comment>
<comment type="interaction">
    <interactant intactId="EBI-3939165">
        <id>O43711</id>
    </interactant>
    <interactant intactId="EBI-12811111">
        <id>Q8IUB9</id>
        <label>KRTAP19-1</label>
    </interactant>
    <organismsDiffer>false</organismsDiffer>
    <experiments>3</experiments>
</comment>
<comment type="interaction">
    <interactant intactId="EBI-3939165">
        <id>O43711</id>
    </interactant>
    <interactant intactId="EBI-10241353">
        <id>Q3SYF9</id>
        <label>KRTAP19-7</label>
    </interactant>
    <organismsDiffer>false</organismsDiffer>
    <experiments>3</experiments>
</comment>
<comment type="interaction">
    <interactant intactId="EBI-3939165">
        <id>O43711</id>
    </interactant>
    <interactant intactId="EBI-9996449">
        <id>Q9BYR8</id>
        <label>KRTAP3-1</label>
    </interactant>
    <organismsDiffer>false</organismsDiffer>
    <experiments>3</experiments>
</comment>
<comment type="interaction">
    <interactant intactId="EBI-3939165">
        <id>O43711</id>
    </interactant>
    <interactant intactId="EBI-12111050">
        <id>Q3LI64</id>
        <label>KRTAP6-1</label>
    </interactant>
    <organismsDiffer>false</organismsDiffer>
    <experiments>3</experiments>
</comment>
<comment type="interaction">
    <interactant intactId="EBI-3939165">
        <id>O43711</id>
    </interactant>
    <interactant intactId="EBI-11962084">
        <id>Q3LI66</id>
        <label>KRTAP6-2</label>
    </interactant>
    <organismsDiffer>false</organismsDiffer>
    <experiments>5</experiments>
</comment>
<comment type="interaction">
    <interactant intactId="EBI-3939165">
        <id>O43711</id>
    </interactant>
    <interactant intactId="EBI-22311199">
        <id>Q3LI67</id>
        <label>KRTAP6-3</label>
    </interactant>
    <organismsDiffer>false</organismsDiffer>
    <experiments>3</experiments>
</comment>
<comment type="interaction">
    <interactant intactId="EBI-3939165">
        <id>O43711</id>
    </interactant>
    <interactant intactId="EBI-18394498">
        <id>Q8IUC3</id>
        <label>KRTAP7-1</label>
    </interactant>
    <organismsDiffer>false</organismsDiffer>
    <experiments>3</experiments>
</comment>
<comment type="interaction">
    <interactant intactId="EBI-3939165">
        <id>O43711</id>
    </interactant>
    <interactant intactId="EBI-10261141">
        <id>Q8IUC2</id>
        <label>KRTAP8-1</label>
    </interactant>
    <organismsDiffer>false</organismsDiffer>
    <experiments>3</experiments>
</comment>
<comment type="interaction">
    <interactant intactId="EBI-3939165">
        <id>O43711</id>
    </interactant>
    <interactant intactId="EBI-9088686">
        <id>Q14847-2</id>
        <label>LASP1</label>
    </interactant>
    <organismsDiffer>false</organismsDiffer>
    <experiments>5</experiments>
</comment>
<comment type="interaction">
    <interactant intactId="EBI-3939165">
        <id>O43711</id>
    </interactant>
    <interactant intactId="EBI-716006">
        <id>Q9Y5V3</id>
        <label>MAGED1</label>
    </interactant>
    <organismsDiffer>false</organismsDiffer>
    <experiments>3</experiments>
</comment>
<comment type="interaction">
    <interactant intactId="EBI-3939165">
        <id>O43711</id>
    </interactant>
    <interactant intactId="EBI-8487781">
        <id>Q8N6F8</id>
        <label>METTL27</label>
    </interactant>
    <organismsDiffer>false</organismsDiffer>
    <experiments>3</experiments>
</comment>
<comment type="interaction">
    <interactant intactId="EBI-3939165">
        <id>O43711</id>
    </interactant>
    <interactant intactId="EBI-12835568">
        <id>Q5VZ52</id>
        <label>MORN5</label>
    </interactant>
    <organismsDiffer>false</organismsDiffer>
    <experiments>3</experiments>
</comment>
<comment type="interaction">
    <interactant intactId="EBI-3939165">
        <id>O43711</id>
    </interactant>
    <interactant intactId="EBI-6447480">
        <id>P35548</id>
        <label>MSX2</label>
    </interactant>
    <organismsDiffer>false</organismsDiffer>
    <experiments>3</experiments>
</comment>
<comment type="interaction">
    <interactant intactId="EBI-3939165">
        <id>O43711</id>
    </interactant>
    <interactant intactId="EBI-1246261">
        <id>O14561</id>
        <label>NDUFAB1</label>
    </interactant>
    <organismsDiffer>false</organismsDiffer>
    <experiments>5</experiments>
</comment>
<comment type="interaction">
    <interactant intactId="EBI-3939165">
        <id>O43711</id>
    </interactant>
    <interactant intactId="EBI-12868744">
        <id>P0CG21</id>
        <label>NHLRC4</label>
    </interactant>
    <organismsDiffer>false</organismsDiffer>
    <experiments>3</experiments>
</comment>
<comment type="interaction">
    <interactant intactId="EBI-3939165">
        <id>O43711</id>
    </interactant>
    <interactant intactId="EBI-13324229">
        <id>Q9BSH3</id>
        <label>NICN1</label>
    </interactant>
    <organismsDiffer>false</organismsDiffer>
    <experiments>3</experiments>
</comment>
<comment type="interaction">
    <interactant intactId="EBI-3939165">
        <id>O43711</id>
    </interactant>
    <interactant intactId="EBI-536879">
        <id>O43482</id>
        <label>OIP5</label>
    </interactant>
    <organismsDiffer>false</organismsDiffer>
    <experiments>3</experiments>
</comment>
<comment type="interaction">
    <interactant intactId="EBI-3939165">
        <id>O43711</id>
    </interactant>
    <interactant intactId="EBI-726466">
        <id>O15496</id>
        <label>PLA2G10</label>
    </interactant>
    <organismsDiffer>false</organismsDiffer>
    <experiments>3</experiments>
</comment>
<comment type="interaction">
    <interactant intactId="EBI-3939165">
        <id>O43711</id>
    </interactant>
    <interactant intactId="EBI-12387058">
        <id>Q9HDD0</id>
        <label>PLAAT1</label>
    </interactant>
    <organismsDiffer>false</organismsDiffer>
    <experiments>3</experiments>
</comment>
<comment type="interaction">
    <interactant intactId="EBI-3939165">
        <id>O43711</id>
    </interactant>
    <interactant intactId="EBI-943588">
        <id>Q16633</id>
        <label>POU2AF1</label>
    </interactant>
    <organismsDiffer>false</organismsDiffer>
    <experiments>3</experiments>
</comment>
<comment type="interaction">
    <interactant intactId="EBI-3939165">
        <id>O43711</id>
    </interactant>
    <interactant intactId="EBI-12029004">
        <id>P78424</id>
        <label>POU6F2</label>
    </interactant>
    <organismsDiffer>false</organismsDiffer>
    <experiments>3</experiments>
</comment>
<comment type="interaction">
    <interactant intactId="EBI-3939165">
        <id>O43711</id>
    </interactant>
    <interactant intactId="EBI-12754095">
        <id>P86480</id>
        <label>PRR20D</label>
    </interactant>
    <organismsDiffer>false</organismsDiffer>
    <experiments>3</experiments>
</comment>
<comment type="interaction">
    <interactant intactId="EBI-3939165">
        <id>O43711</id>
    </interactant>
    <interactant intactId="EBI-19951687">
        <id>A5LHX3</id>
        <label>PSMB11</label>
    </interactant>
    <organismsDiffer>false</organismsDiffer>
    <experiments>3</experiments>
</comment>
<comment type="interaction">
    <interactant intactId="EBI-3939165">
        <id>O43711</id>
    </interactant>
    <interactant intactId="EBI-10829018">
        <id>Q04864-2</id>
        <label>REL</label>
    </interactant>
    <organismsDiffer>false</organismsDiffer>
    <experiments>3</experiments>
</comment>
<comment type="interaction">
    <interactant intactId="EBI-3939165">
        <id>O43711</id>
    </interactant>
    <interactant intactId="EBI-6422642">
        <id>Q01974</id>
        <label>ROR2</label>
    </interactant>
    <organismsDiffer>false</organismsDiffer>
    <experiments>3</experiments>
</comment>
<comment type="interaction">
    <interactant intactId="EBI-3939165">
        <id>O43711</id>
    </interactant>
    <interactant intactId="EBI-1054572">
        <id>Q96LW2</id>
        <label>RSKR</label>
    </interactant>
    <organismsDiffer>false</organismsDiffer>
    <experiments>3</experiments>
</comment>
<comment type="interaction">
    <interactant intactId="EBI-3939165">
        <id>O43711</id>
    </interactant>
    <interactant intactId="EBI-953978">
        <id>P05121</id>
        <label>SERPINE1</label>
    </interactant>
    <organismsDiffer>false</organismsDiffer>
    <experiments>3</experiments>
</comment>
<comment type="interaction">
    <interactant intactId="EBI-3939165">
        <id>O43711</id>
    </interactant>
    <interactant intactId="EBI-12806032">
        <id>Q16348</id>
        <label>SLC15A2</label>
    </interactant>
    <organismsDiffer>false</organismsDiffer>
    <experiments>3</experiments>
</comment>
<comment type="interaction">
    <interactant intactId="EBI-3939165">
        <id>O43711</id>
    </interactant>
    <interactant intactId="EBI-298027">
        <id>Q2TAY7</id>
        <label>SMU1</label>
    </interactant>
    <organismsDiffer>false</organismsDiffer>
    <experiments>3</experiments>
</comment>
<comment type="interaction">
    <interactant intactId="EBI-3939165">
        <id>O43711</id>
    </interactant>
    <interactant intactId="EBI-750105">
        <id>Q5T0L3</id>
        <label>SPATA46</label>
    </interactant>
    <organismsDiffer>false</organismsDiffer>
    <experiments>3</experiments>
</comment>
<comment type="interaction">
    <interactant intactId="EBI-3939165">
        <id>O43711</id>
    </interactant>
    <interactant intactId="EBI-743976">
        <id>Q96LM6</id>
        <label>SPMIP9</label>
    </interactant>
    <organismsDiffer>false</organismsDiffer>
    <experiments>3</experiments>
</comment>
<comment type="interaction">
    <interactant intactId="EBI-3939165">
        <id>O43711</id>
    </interactant>
    <interactant intactId="EBI-12408727">
        <id>Q5W111-2</id>
        <label>SPRYD7</label>
    </interactant>
    <organismsDiffer>false</organismsDiffer>
    <experiments>3</experiments>
</comment>
<comment type="interaction">
    <interactant intactId="EBI-3939165">
        <id>O43711</id>
    </interactant>
    <interactant intactId="EBI-12843506">
        <id>Q8IWL8</id>
        <label>STH</label>
    </interactant>
    <organismsDiffer>false</organismsDiffer>
    <experiments>5</experiments>
</comment>
<comment type="interaction">
    <interactant intactId="EBI-3939165">
        <id>O43711</id>
    </interactant>
    <interactant intactId="EBI-2682386">
        <id>Q96PV0</id>
        <label>SYNGAP1</label>
    </interactant>
    <organismsDiffer>false</organismsDiffer>
    <experiments>3</experiments>
</comment>
<comment type="interaction">
    <interactant intactId="EBI-3939165">
        <id>O43711</id>
    </interactant>
    <interactant intactId="EBI-6427217">
        <id>Q9Y458</id>
        <label>TBX22</label>
    </interactant>
    <organismsDiffer>false</organismsDiffer>
    <experiments>3</experiments>
</comment>
<comment type="interaction">
    <interactant intactId="EBI-3939165">
        <id>O43711</id>
    </interactant>
    <interactant intactId="EBI-3914669">
        <id>Q13488</id>
        <label>TCIRG1</label>
    </interactant>
    <organismsDiffer>false</organismsDiffer>
    <experiments>3</experiments>
</comment>
<comment type="interaction">
    <interactant intactId="EBI-3939165">
        <id>O43711</id>
    </interactant>
    <interactant intactId="EBI-10239812">
        <id>Q96M29</id>
        <label>TEKT5</label>
    </interactant>
    <organismsDiffer>false</organismsDiffer>
    <experiments>3</experiments>
</comment>
<comment type="interaction">
    <interactant intactId="EBI-3939165">
        <id>O43711</id>
    </interactant>
    <interactant intactId="EBI-2820864">
        <id>Q9BU02</id>
        <label>THTPA</label>
    </interactant>
    <organismsDiffer>false</organismsDiffer>
    <experiments>3</experiments>
</comment>
<comment type="interaction">
    <interactant intactId="EBI-3939165">
        <id>O43711</id>
    </interactant>
    <interactant intactId="EBI-12038591">
        <id>Q69YG0</id>
        <label>TMEM42</label>
    </interactant>
    <organismsDiffer>false</organismsDiffer>
    <experiments>3</experiments>
</comment>
<comment type="interaction">
    <interactant intactId="EBI-3939165">
        <id>O43711</id>
    </interactant>
    <interactant intactId="EBI-12815137">
        <id>Q96NM4-3</id>
        <label>TOX2</label>
    </interactant>
    <organismsDiffer>false</organismsDiffer>
    <experiments>3</experiments>
</comment>
<comment type="interaction">
    <interactant intactId="EBI-3939165">
        <id>O43711</id>
    </interactant>
    <interactant intactId="EBI-396540">
        <id>Q12888</id>
        <label>TP53BP1</label>
    </interactant>
    <organismsDiffer>false</organismsDiffer>
    <experiments>3</experiments>
</comment>
<comment type="interaction">
    <interactant intactId="EBI-3939165">
        <id>O43711</id>
    </interactant>
    <interactant intactId="EBI-5235829">
        <id>Q8IWZ5</id>
        <label>TRIM42</label>
    </interactant>
    <organismsDiffer>false</organismsDiffer>
    <experiments>3</experiments>
</comment>
<comment type="interaction">
    <interactant intactId="EBI-3939165">
        <id>O43711</id>
    </interactant>
    <interactant intactId="EBI-12068150">
        <id>Q6NVU6</id>
        <label>UFSP1</label>
    </interactant>
    <organismsDiffer>false</organismsDiffer>
    <experiments>3</experiments>
</comment>
<comment type="interaction">
    <interactant intactId="EBI-3939165">
        <id>O43711</id>
    </interactant>
    <interactant intactId="EBI-7705033">
        <id>Q9BRX9</id>
        <label>WDR83</label>
    </interactant>
    <organismsDiffer>false</organismsDiffer>
    <experiments>3</experiments>
</comment>
<comment type="interaction">
    <interactant intactId="EBI-3939165">
        <id>O43711</id>
    </interactant>
    <interactant intactId="EBI-10188476">
        <id>A0A0C4DGF1</id>
        <label>ZBTB32</label>
    </interactant>
    <organismsDiffer>false</organismsDiffer>
    <experiments>3</experiments>
</comment>
<comment type="interaction">
    <interactant intactId="EBI-3939165">
        <id>O43711</id>
    </interactant>
    <interactant intactId="EBI-12945254">
        <id>M0R160</id>
        <label>ZNF44</label>
    </interactant>
    <organismsDiffer>false</organismsDiffer>
    <experiments>3</experiments>
</comment>
<comment type="interaction">
    <interactant intactId="EBI-3939165">
        <id>O43711</id>
    </interactant>
    <interactant intactId="EBI-10177989">
        <id>G4XUV3</id>
    </interactant>
    <organismsDiffer>false</organismsDiffer>
    <experiments>3</experiments>
</comment>
<comment type="interaction">
    <interactant intactId="EBI-3939165">
        <id>O43711</id>
    </interactant>
    <interactant intactId="EBI-4289053">
        <id>P27577</id>
        <label>Ets1</label>
    </interactant>
    <organismsDiffer>true</organismsDiffer>
    <experiments>2</experiments>
</comment>
<comment type="subcellular location">
    <subcellularLocation>
        <location evidence="3">Nucleus</location>
    </subcellularLocation>
</comment>
<comment type="online information" name="Atlas of Genetics and Cytogenetics in Oncology and Haematology">
    <link uri="https://atlasgeneticsoncology.org/gene/398/TLX3"/>
</comment>
<feature type="chain" id="PRO_0000049338" description="T-cell leukemia homeobox protein 3">
    <location>
        <begin position="1"/>
        <end position="291"/>
    </location>
</feature>
<feature type="DNA-binding region" description="Homeobox" evidence="1">
    <location>
        <begin position="166"/>
        <end position="225"/>
    </location>
</feature>
<feature type="region of interest" description="Disordered" evidence="2">
    <location>
        <begin position="1"/>
        <end position="56"/>
    </location>
</feature>
<feature type="sequence conflict" description="In Ref. 1; CAA11550." evidence="3" ref="1">
    <original>L</original>
    <variation>P</variation>
    <location>
        <position position="66"/>
    </location>
</feature>
<feature type="sequence conflict" description="In Ref. 1; CAA11550." evidence="3" ref="1">
    <original>G</original>
    <variation>R</variation>
    <location>
        <position position="122"/>
    </location>
</feature>
<feature type="sequence conflict" description="In Ref. 1; CAA11550." evidence="3" ref="1">
    <original>ER</original>
    <variation>DG</variation>
    <location>
        <begin position="232"/>
        <end position="233"/>
    </location>
</feature>
<organism>
    <name type="scientific">Homo sapiens</name>
    <name type="common">Human</name>
    <dbReference type="NCBI Taxonomy" id="9606"/>
    <lineage>
        <taxon>Eukaryota</taxon>
        <taxon>Metazoa</taxon>
        <taxon>Chordata</taxon>
        <taxon>Craniata</taxon>
        <taxon>Vertebrata</taxon>
        <taxon>Euteleostomi</taxon>
        <taxon>Mammalia</taxon>
        <taxon>Eutheria</taxon>
        <taxon>Euarchontoglires</taxon>
        <taxon>Primates</taxon>
        <taxon>Haplorrhini</taxon>
        <taxon>Catarrhini</taxon>
        <taxon>Hominidae</taxon>
        <taxon>Homo</taxon>
    </lineage>
</organism>
<sequence length="291" mass="31867">MEAPASAQTPHPHEPISFGIDQILNSPDQDSAPAPRGPDGASYLGGPPGGRPGATYPSLPASFAGLGAPFEDAGSYSVNLSLAPAGVIRVPAHRPLPGAVPPPLPSALPAMPSVPTVSSLGGLNFPWMESSRRFVKDRFTAAAALTPFTVTRRIGHPYQNRTPPKRKKPRTSFSRVQICELEKRFHRQKYLASAERAALAKSLKMTDAQVKTWFQNRRTKWRRQTAEEREAERQQASRLMLQLQHDAFQKSLNDSIQPDPLCLHNSSLFALQNLQPWEEDSSKVPAVTSLV</sequence>
<dbReference type="EMBL" id="AJ223798">
    <property type="protein sequence ID" value="CAA11550.1"/>
    <property type="molecule type" value="Genomic_DNA"/>
</dbReference>
<dbReference type="EMBL" id="AJ223799">
    <property type="protein sequence ID" value="CAA11550.1"/>
    <property type="status" value="JOINED"/>
    <property type="molecule type" value="Genomic_DNA"/>
</dbReference>
<dbReference type="EMBL" id="AJ223800">
    <property type="protein sequence ID" value="CAA11550.1"/>
    <property type="status" value="JOINED"/>
    <property type="molecule type" value="Genomic_DNA"/>
</dbReference>
<dbReference type="EMBL" id="BC017291">
    <property type="protein sequence ID" value="AAH17291.1"/>
    <property type="molecule type" value="mRNA"/>
</dbReference>
<dbReference type="CCDS" id="CCDS34288.1"/>
<dbReference type="RefSeq" id="NP_066305.2">
    <property type="nucleotide sequence ID" value="NM_021025.4"/>
</dbReference>
<dbReference type="SMR" id="O43711"/>
<dbReference type="BioGRID" id="119030">
    <property type="interactions" value="260"/>
</dbReference>
<dbReference type="ELM" id="O43711"/>
<dbReference type="FunCoup" id="O43711">
    <property type="interactions" value="1483"/>
</dbReference>
<dbReference type="IntAct" id="O43711">
    <property type="interactions" value="248"/>
</dbReference>
<dbReference type="STRING" id="9606.ENSP00000296921"/>
<dbReference type="iPTMnet" id="O43711"/>
<dbReference type="PhosphoSitePlus" id="O43711"/>
<dbReference type="BioMuta" id="TLX3"/>
<dbReference type="jPOST" id="O43711"/>
<dbReference type="MassIVE" id="O43711"/>
<dbReference type="PaxDb" id="9606-ENSP00000296921"/>
<dbReference type="PeptideAtlas" id="O43711"/>
<dbReference type="Antibodypedia" id="28858">
    <property type="antibodies" value="163 antibodies from 24 providers"/>
</dbReference>
<dbReference type="DNASU" id="30012"/>
<dbReference type="Ensembl" id="ENST00000296921.6">
    <property type="protein sequence ID" value="ENSP00000296921.5"/>
    <property type="gene ID" value="ENSG00000164438.6"/>
</dbReference>
<dbReference type="GeneID" id="30012"/>
<dbReference type="KEGG" id="hsa:30012"/>
<dbReference type="MANE-Select" id="ENST00000296921.6">
    <property type="protein sequence ID" value="ENSP00000296921.5"/>
    <property type="RefSeq nucleotide sequence ID" value="NM_021025.4"/>
    <property type="RefSeq protein sequence ID" value="NP_066305.2"/>
</dbReference>
<dbReference type="UCSC" id="uc003mbf.3">
    <property type="organism name" value="human"/>
</dbReference>
<dbReference type="AGR" id="HGNC:13532"/>
<dbReference type="CTD" id="30012"/>
<dbReference type="DisGeNET" id="30012"/>
<dbReference type="GeneCards" id="TLX3"/>
<dbReference type="HGNC" id="HGNC:13532">
    <property type="gene designation" value="TLX3"/>
</dbReference>
<dbReference type="HPA" id="ENSG00000164438">
    <property type="expression patterns" value="Tissue enriched (brain)"/>
</dbReference>
<dbReference type="MalaCards" id="TLX3"/>
<dbReference type="MIM" id="604640">
    <property type="type" value="gene"/>
</dbReference>
<dbReference type="neXtProt" id="NX_O43711"/>
<dbReference type="OpenTargets" id="ENSG00000164438"/>
<dbReference type="Orphanet" id="99861">
    <property type="disease" value="Precursor T-cell acute lymphoblastic leukemia"/>
</dbReference>
<dbReference type="PharmGKB" id="PA37797"/>
<dbReference type="VEuPathDB" id="HostDB:ENSG00000164438"/>
<dbReference type="eggNOG" id="KOG0488">
    <property type="taxonomic scope" value="Eukaryota"/>
</dbReference>
<dbReference type="GeneTree" id="ENSGT00940000160629"/>
<dbReference type="HOGENOM" id="CLU_053409_1_0_1"/>
<dbReference type="InParanoid" id="O43711"/>
<dbReference type="OMA" id="TPHQHEP"/>
<dbReference type="OrthoDB" id="9451579at2759"/>
<dbReference type="PAN-GO" id="O43711">
    <property type="GO annotations" value="5 GO annotations based on evolutionary models"/>
</dbReference>
<dbReference type="PhylomeDB" id="O43711"/>
<dbReference type="TreeFam" id="TF325347"/>
<dbReference type="PathwayCommons" id="O43711"/>
<dbReference type="SignaLink" id="O43711"/>
<dbReference type="SIGNOR" id="O43711"/>
<dbReference type="BioGRID-ORCS" id="30012">
    <property type="hits" value="14 hits in 1171 CRISPR screens"/>
</dbReference>
<dbReference type="ChiTaRS" id="TLX3">
    <property type="organism name" value="human"/>
</dbReference>
<dbReference type="GeneWiki" id="TLX3"/>
<dbReference type="GenomeRNAi" id="30012"/>
<dbReference type="Pharos" id="O43711">
    <property type="development level" value="Tbio"/>
</dbReference>
<dbReference type="PRO" id="PR:O43711"/>
<dbReference type="Proteomes" id="UP000005640">
    <property type="component" value="Chromosome 5"/>
</dbReference>
<dbReference type="RNAct" id="O43711">
    <property type="molecule type" value="protein"/>
</dbReference>
<dbReference type="Bgee" id="ENSG00000164438">
    <property type="expression patterns" value="Expressed in right hemisphere of cerebellum and 20 other cell types or tissues"/>
</dbReference>
<dbReference type="GO" id="GO:0000785">
    <property type="term" value="C:chromatin"/>
    <property type="evidence" value="ECO:0000247"/>
    <property type="project" value="NTNU_SB"/>
</dbReference>
<dbReference type="GO" id="GO:0005654">
    <property type="term" value="C:nucleoplasm"/>
    <property type="evidence" value="ECO:0000314"/>
    <property type="project" value="HPA"/>
</dbReference>
<dbReference type="GO" id="GO:0005634">
    <property type="term" value="C:nucleus"/>
    <property type="evidence" value="ECO:0000318"/>
    <property type="project" value="GO_Central"/>
</dbReference>
<dbReference type="GO" id="GO:0000981">
    <property type="term" value="F:DNA-binding transcription factor activity, RNA polymerase II-specific"/>
    <property type="evidence" value="ECO:0000247"/>
    <property type="project" value="NTNU_SB"/>
</dbReference>
<dbReference type="GO" id="GO:1990837">
    <property type="term" value="F:sequence-specific double-stranded DNA binding"/>
    <property type="evidence" value="ECO:0000314"/>
    <property type="project" value="ARUK-UCL"/>
</dbReference>
<dbReference type="GO" id="GO:0048513">
    <property type="term" value="P:animal organ development"/>
    <property type="evidence" value="ECO:0000318"/>
    <property type="project" value="GO_Central"/>
</dbReference>
<dbReference type="GO" id="GO:0007417">
    <property type="term" value="P:central nervous system development"/>
    <property type="evidence" value="ECO:0007669"/>
    <property type="project" value="Ensembl"/>
</dbReference>
<dbReference type="GO" id="GO:0097154">
    <property type="term" value="P:GABAergic neuron differentiation"/>
    <property type="evidence" value="ECO:0007669"/>
    <property type="project" value="Ensembl"/>
</dbReference>
<dbReference type="GO" id="GO:0045665">
    <property type="term" value="P:negative regulation of neuron differentiation"/>
    <property type="evidence" value="ECO:0007669"/>
    <property type="project" value="Ensembl"/>
</dbReference>
<dbReference type="GO" id="GO:0048665">
    <property type="term" value="P:neuron fate specification"/>
    <property type="evidence" value="ECO:0007669"/>
    <property type="project" value="Ensembl"/>
</dbReference>
<dbReference type="GO" id="GO:0001764">
    <property type="term" value="P:neuron migration"/>
    <property type="evidence" value="ECO:0007669"/>
    <property type="project" value="Ensembl"/>
</dbReference>
<dbReference type="GO" id="GO:0002087">
    <property type="term" value="P:regulation of respiratory gaseous exchange by nervous system process"/>
    <property type="evidence" value="ECO:0007669"/>
    <property type="project" value="Ensembl"/>
</dbReference>
<dbReference type="GO" id="GO:0006357">
    <property type="term" value="P:regulation of transcription by RNA polymerase II"/>
    <property type="evidence" value="ECO:0000318"/>
    <property type="project" value="GO_Central"/>
</dbReference>
<dbReference type="GO" id="GO:0007585">
    <property type="term" value="P:respiratory gaseous exchange by respiratory system"/>
    <property type="evidence" value="ECO:0007669"/>
    <property type="project" value="Ensembl"/>
</dbReference>
<dbReference type="CDD" id="cd00086">
    <property type="entry name" value="homeodomain"/>
    <property type="match status" value="1"/>
</dbReference>
<dbReference type="FunFam" id="1.10.10.60:FF:000040">
    <property type="entry name" value="T-cell leukemia homeobox protein 3"/>
    <property type="match status" value="1"/>
</dbReference>
<dbReference type="Gene3D" id="1.10.10.60">
    <property type="entry name" value="Homeodomain-like"/>
    <property type="match status" value="1"/>
</dbReference>
<dbReference type="InterPro" id="IPR001356">
    <property type="entry name" value="HD"/>
</dbReference>
<dbReference type="InterPro" id="IPR020479">
    <property type="entry name" value="HD_metazoa"/>
</dbReference>
<dbReference type="InterPro" id="IPR017970">
    <property type="entry name" value="Homeobox_CS"/>
</dbReference>
<dbReference type="InterPro" id="IPR009057">
    <property type="entry name" value="Homeodomain-like_sf"/>
</dbReference>
<dbReference type="InterPro" id="IPR042247">
    <property type="entry name" value="TLX1/2/3"/>
</dbReference>
<dbReference type="PANTHER" id="PTHR45921">
    <property type="entry name" value="IP01054P"/>
    <property type="match status" value="1"/>
</dbReference>
<dbReference type="PANTHER" id="PTHR45921:SF1">
    <property type="entry name" value="T-CELL LEUKEMIA HOMEOBOX PROTEIN 3"/>
    <property type="match status" value="1"/>
</dbReference>
<dbReference type="Pfam" id="PF00046">
    <property type="entry name" value="Homeodomain"/>
    <property type="match status" value="1"/>
</dbReference>
<dbReference type="PRINTS" id="PR00024">
    <property type="entry name" value="HOMEOBOX"/>
</dbReference>
<dbReference type="SMART" id="SM00389">
    <property type="entry name" value="HOX"/>
    <property type="match status" value="1"/>
</dbReference>
<dbReference type="SUPFAM" id="SSF46689">
    <property type="entry name" value="Homeodomain-like"/>
    <property type="match status" value="1"/>
</dbReference>
<dbReference type="PROSITE" id="PS00027">
    <property type="entry name" value="HOMEOBOX_1"/>
    <property type="match status" value="1"/>
</dbReference>
<dbReference type="PROSITE" id="PS50071">
    <property type="entry name" value="HOMEOBOX_2"/>
    <property type="match status" value="1"/>
</dbReference>
<keyword id="KW-0217">Developmental protein</keyword>
<keyword id="KW-0238">DNA-binding</keyword>
<keyword id="KW-0371">Homeobox</keyword>
<keyword id="KW-0539">Nucleus</keyword>
<keyword id="KW-1267">Proteomics identification</keyword>
<keyword id="KW-1185">Reference proteome</keyword>